<accession>Q5N366</accession>
<organism>
    <name type="scientific">Synechococcus sp. (strain ATCC 27144 / PCC 6301 / SAUG 1402/1)</name>
    <name type="common">Anacystis nidulans</name>
    <dbReference type="NCBI Taxonomy" id="269084"/>
    <lineage>
        <taxon>Bacteria</taxon>
        <taxon>Bacillati</taxon>
        <taxon>Cyanobacteriota</taxon>
        <taxon>Cyanophyceae</taxon>
        <taxon>Synechococcales</taxon>
        <taxon>Synechococcaceae</taxon>
        <taxon>Synechococcus</taxon>
    </lineage>
</organism>
<protein>
    <recommendedName>
        <fullName evidence="1">Adenosylcobinamide-GDP ribazoletransferase</fullName>
        <ecNumber evidence="1">2.7.8.26</ecNumber>
    </recommendedName>
    <alternativeName>
        <fullName evidence="1">Cobalamin synthase</fullName>
    </alternativeName>
    <alternativeName>
        <fullName evidence="1">Cobalamin-5'-phosphate synthase</fullName>
    </alternativeName>
</protein>
<gene>
    <name evidence="1" type="primary">cobS</name>
    <name type="ordered locus">syc1064_d</name>
</gene>
<feature type="chain" id="PRO_1000045816" description="Adenosylcobinamide-GDP ribazoletransferase">
    <location>
        <begin position="1"/>
        <end position="251"/>
    </location>
</feature>
<feature type="transmembrane region" description="Helical" evidence="1">
    <location>
        <begin position="29"/>
        <end position="49"/>
    </location>
</feature>
<feature type="transmembrane region" description="Helical" evidence="1">
    <location>
        <begin position="65"/>
        <end position="85"/>
    </location>
</feature>
<feature type="transmembrane region" description="Helical" evidence="1">
    <location>
        <begin position="110"/>
        <end position="130"/>
    </location>
</feature>
<feature type="transmembrane region" description="Helical" evidence="1">
    <location>
        <begin position="136"/>
        <end position="156"/>
    </location>
</feature>
<feature type="transmembrane region" description="Helical" evidence="1">
    <location>
        <begin position="175"/>
        <end position="195"/>
    </location>
</feature>
<feature type="transmembrane region" description="Helical" evidence="1">
    <location>
        <begin position="198"/>
        <end position="218"/>
    </location>
</feature>
<reference key="1">
    <citation type="journal article" date="2007" name="Photosyn. Res.">
        <title>Complete nucleotide sequence of the freshwater unicellular cyanobacterium Synechococcus elongatus PCC 6301 chromosome: gene content and organization.</title>
        <authorList>
            <person name="Sugita C."/>
            <person name="Ogata K."/>
            <person name="Shikata M."/>
            <person name="Jikuya H."/>
            <person name="Takano J."/>
            <person name="Furumichi M."/>
            <person name="Kanehisa M."/>
            <person name="Omata T."/>
            <person name="Sugiura M."/>
            <person name="Sugita M."/>
        </authorList>
    </citation>
    <scope>NUCLEOTIDE SEQUENCE [LARGE SCALE GENOMIC DNA]</scope>
    <source>
        <strain>ATCC 27144 / PCC 6301 / SAUG 1402/1</strain>
    </source>
</reference>
<sequence length="251" mass="26961">MIRQLWTELNAAILFYTVLPLPQRWPTQFAGMSRWAPIVGLILGLILAVSDRLLAVGQFPLPLRSLLIVLLAIALTGGLHLDGAMDTADGLAVPNPDRRLEVMSDSHTGAFGAIAAIAIISLKTIALCYLPAPRSLLILLIPVWGRWAQVLAIVRYPYLKAEGKGAIHKQTGRGAIDLLPGAIALVLGIGAIARFHSLTVALQLLAIGLLWAWATGAWLQKKLGGQTGDTYGAIVEWTEALIWVSFTIGQV</sequence>
<name>COBS_SYNP6</name>
<dbReference type="EC" id="2.7.8.26" evidence="1"/>
<dbReference type="EMBL" id="AP008231">
    <property type="protein sequence ID" value="BAD79254.1"/>
    <property type="molecule type" value="Genomic_DNA"/>
</dbReference>
<dbReference type="RefSeq" id="WP_011243375.1">
    <property type="nucleotide sequence ID" value="NZ_CP085785.1"/>
</dbReference>
<dbReference type="GeneID" id="72429276"/>
<dbReference type="KEGG" id="syc:syc1064_d"/>
<dbReference type="eggNOG" id="COG0368">
    <property type="taxonomic scope" value="Bacteria"/>
</dbReference>
<dbReference type="UniPathway" id="UPA00148">
    <property type="reaction ID" value="UER00238"/>
</dbReference>
<dbReference type="Proteomes" id="UP000001175">
    <property type="component" value="Chromosome"/>
</dbReference>
<dbReference type="GO" id="GO:0005886">
    <property type="term" value="C:plasma membrane"/>
    <property type="evidence" value="ECO:0007669"/>
    <property type="project" value="UniProtKB-SubCell"/>
</dbReference>
<dbReference type="GO" id="GO:0051073">
    <property type="term" value="F:adenosylcobinamide-GDP ribazoletransferase activity"/>
    <property type="evidence" value="ECO:0007669"/>
    <property type="project" value="UniProtKB-UniRule"/>
</dbReference>
<dbReference type="GO" id="GO:0008818">
    <property type="term" value="F:cobalamin 5'-phosphate synthase activity"/>
    <property type="evidence" value="ECO:0007669"/>
    <property type="project" value="UniProtKB-UniRule"/>
</dbReference>
<dbReference type="GO" id="GO:0009236">
    <property type="term" value="P:cobalamin biosynthetic process"/>
    <property type="evidence" value="ECO:0007669"/>
    <property type="project" value="UniProtKB-UniRule"/>
</dbReference>
<dbReference type="HAMAP" id="MF_00719">
    <property type="entry name" value="CobS"/>
    <property type="match status" value="1"/>
</dbReference>
<dbReference type="InterPro" id="IPR003805">
    <property type="entry name" value="CobS"/>
</dbReference>
<dbReference type="NCBIfam" id="TIGR00317">
    <property type="entry name" value="cobS"/>
    <property type="match status" value="1"/>
</dbReference>
<dbReference type="PANTHER" id="PTHR34148">
    <property type="entry name" value="ADENOSYLCOBINAMIDE-GDP RIBAZOLETRANSFERASE"/>
    <property type="match status" value="1"/>
</dbReference>
<dbReference type="PANTHER" id="PTHR34148:SF1">
    <property type="entry name" value="ADENOSYLCOBINAMIDE-GDP RIBAZOLETRANSFERASE"/>
    <property type="match status" value="1"/>
</dbReference>
<dbReference type="Pfam" id="PF02654">
    <property type="entry name" value="CobS"/>
    <property type="match status" value="1"/>
</dbReference>
<evidence type="ECO:0000255" key="1">
    <source>
        <dbReference type="HAMAP-Rule" id="MF_00719"/>
    </source>
</evidence>
<proteinExistence type="inferred from homology"/>
<keyword id="KW-0997">Cell inner membrane</keyword>
<keyword id="KW-1003">Cell membrane</keyword>
<keyword id="KW-0169">Cobalamin biosynthesis</keyword>
<keyword id="KW-0460">Magnesium</keyword>
<keyword id="KW-0472">Membrane</keyword>
<keyword id="KW-0808">Transferase</keyword>
<keyword id="KW-0812">Transmembrane</keyword>
<keyword id="KW-1133">Transmembrane helix</keyword>
<comment type="function">
    <text evidence="1">Joins adenosylcobinamide-GDP and alpha-ribazole to generate adenosylcobalamin (Ado-cobalamin). Also synthesizes adenosylcobalamin 5'-phosphate from adenosylcobinamide-GDP and alpha-ribazole 5'-phosphate.</text>
</comment>
<comment type="catalytic activity">
    <reaction evidence="1">
        <text>alpha-ribazole + adenosylcob(III)inamide-GDP = adenosylcob(III)alamin + GMP + H(+)</text>
        <dbReference type="Rhea" id="RHEA:16049"/>
        <dbReference type="ChEBI" id="CHEBI:10329"/>
        <dbReference type="ChEBI" id="CHEBI:15378"/>
        <dbReference type="ChEBI" id="CHEBI:18408"/>
        <dbReference type="ChEBI" id="CHEBI:58115"/>
        <dbReference type="ChEBI" id="CHEBI:60487"/>
        <dbReference type="EC" id="2.7.8.26"/>
    </reaction>
</comment>
<comment type="catalytic activity">
    <reaction evidence="1">
        <text>alpha-ribazole 5'-phosphate + adenosylcob(III)inamide-GDP = adenosylcob(III)alamin 5'-phosphate + GMP + H(+)</text>
        <dbReference type="Rhea" id="RHEA:23560"/>
        <dbReference type="ChEBI" id="CHEBI:15378"/>
        <dbReference type="ChEBI" id="CHEBI:57918"/>
        <dbReference type="ChEBI" id="CHEBI:58115"/>
        <dbReference type="ChEBI" id="CHEBI:60487"/>
        <dbReference type="ChEBI" id="CHEBI:60493"/>
        <dbReference type="EC" id="2.7.8.26"/>
    </reaction>
</comment>
<comment type="cofactor">
    <cofactor evidence="1">
        <name>Mg(2+)</name>
        <dbReference type="ChEBI" id="CHEBI:18420"/>
    </cofactor>
</comment>
<comment type="pathway">
    <text evidence="1">Cofactor biosynthesis; adenosylcobalamin biosynthesis; adenosylcobalamin from cob(II)yrinate a,c-diamide: step 7/7.</text>
</comment>
<comment type="subcellular location">
    <subcellularLocation>
        <location evidence="1">Cell inner membrane</location>
        <topology evidence="1">Multi-pass membrane protein</topology>
    </subcellularLocation>
</comment>
<comment type="similarity">
    <text evidence="1">Belongs to the CobS family.</text>
</comment>